<accession>P0DSI9</accession>
<comment type="function">
    <text evidence="1">Shows a broad spectrum of activity against both Gram-positive and Gram-negative bacteria. Also has antimicrobial activity against S.cerevisiae. Has insecticidal and non-hemolytic activity.</text>
</comment>
<comment type="subcellular location">
    <subcellularLocation>
        <location evidence="5">Secreted</location>
    </subcellularLocation>
</comment>
<comment type="tissue specificity">
    <text evidence="5">Expressed by the venom gland.</text>
</comment>
<comment type="similarity">
    <text evidence="4">Belongs to the ponericin-G family.</text>
</comment>
<reference key="1">
    <citation type="journal article" date="2014" name="Toxicon">
        <title>Diversity of peptide toxins from stinging ant venoms.</title>
        <authorList>
            <person name="Aili S.R."/>
            <person name="Touchard A."/>
            <person name="Escoubas P."/>
            <person name="Padula M.P."/>
            <person name="Orivel J."/>
            <person name="Dejean A."/>
            <person name="Nicholson G.M."/>
        </authorList>
    </citation>
    <scope>REVIEW</scope>
    <scope>PROTEIN SEQUENCE</scope>
</reference>
<reference key="2">
    <citation type="journal article" date="2016" name="Toxins">
        <title>The biochemical toxin arsenal from ant venoms.</title>
        <authorList>
            <person name="Touchard A."/>
            <person name="Aili S.R."/>
            <person name="Fox E.G."/>
            <person name="Escoubas P."/>
            <person name="Orivel J."/>
            <person name="Nicholson G.M."/>
            <person name="Dejean A."/>
        </authorList>
    </citation>
    <scope>REVIEW</scope>
    <scope>NOMENCLATURE</scope>
</reference>
<protein>
    <recommendedName>
        <fullName evidence="3">U1-poneritoxin-Na3b</fullName>
        <shortName evidence="3">U1-PONTX-Na3b</shortName>
    </recommendedName>
    <alternativeName>
        <fullName evidence="4">Poneratoxin</fullName>
    </alternativeName>
    <alternativeName>
        <fullName evidence="2">Ponericin Pa I2</fullName>
    </alternativeName>
</protein>
<evidence type="ECO:0000250" key="1">
    <source>
        <dbReference type="UniProtKB" id="P82414"/>
    </source>
</evidence>
<evidence type="ECO:0000303" key="2">
    <source>
    </source>
</evidence>
<evidence type="ECO:0000303" key="3">
    <source>
    </source>
</evidence>
<evidence type="ECO:0000305" key="4"/>
<evidence type="ECO:0000305" key="5">
    <source>
    </source>
</evidence>
<dbReference type="GO" id="GO:0005576">
    <property type="term" value="C:extracellular region"/>
    <property type="evidence" value="ECO:0007669"/>
    <property type="project" value="UniProtKB-SubCell"/>
</dbReference>
<dbReference type="GO" id="GO:0090729">
    <property type="term" value="F:toxin activity"/>
    <property type="evidence" value="ECO:0007669"/>
    <property type="project" value="UniProtKB-KW"/>
</dbReference>
<dbReference type="GO" id="GO:0042742">
    <property type="term" value="P:defense response to bacterium"/>
    <property type="evidence" value="ECO:0007669"/>
    <property type="project" value="UniProtKB-KW"/>
</dbReference>
<dbReference type="GO" id="GO:0050832">
    <property type="term" value="P:defense response to fungus"/>
    <property type="evidence" value="ECO:0007669"/>
    <property type="project" value="UniProtKB-KW"/>
</dbReference>
<dbReference type="GO" id="GO:0031640">
    <property type="term" value="P:killing of cells of another organism"/>
    <property type="evidence" value="ECO:0007669"/>
    <property type="project" value="UniProtKB-KW"/>
</dbReference>
<dbReference type="InterPro" id="IPR010002">
    <property type="entry name" value="Poneritoxin"/>
</dbReference>
<dbReference type="Pfam" id="PF07442">
    <property type="entry name" value="Ponericin"/>
    <property type="match status" value="1"/>
</dbReference>
<sequence>GFMDLIKKAGGWLKKKGPALIKAALQE</sequence>
<keyword id="KW-0044">Antibiotic</keyword>
<keyword id="KW-0929">Antimicrobial</keyword>
<keyword id="KW-0903">Direct protein sequencing</keyword>
<keyword id="KW-0295">Fungicide</keyword>
<keyword id="KW-0964">Secreted</keyword>
<keyword id="KW-0800">Toxin</keyword>
<proteinExistence type="evidence at protein level"/>
<organism>
    <name type="scientific">Neoponera apicalis</name>
    <name type="common">Ant</name>
    <name type="synonym">Pachycondyla apicalis</name>
    <dbReference type="NCBI Taxonomy" id="2320211"/>
    <lineage>
        <taxon>Eukaryota</taxon>
        <taxon>Metazoa</taxon>
        <taxon>Ecdysozoa</taxon>
        <taxon>Arthropoda</taxon>
        <taxon>Hexapoda</taxon>
        <taxon>Insecta</taxon>
        <taxon>Pterygota</taxon>
        <taxon>Neoptera</taxon>
        <taxon>Endopterygota</taxon>
        <taxon>Hymenoptera</taxon>
        <taxon>Apocrita</taxon>
        <taxon>Aculeata</taxon>
        <taxon>Formicoidea</taxon>
        <taxon>Formicidae</taxon>
        <taxon>Ponerinae</taxon>
        <taxon>Ponerini</taxon>
        <taxon>Neoponera</taxon>
    </lineage>
</organism>
<feature type="peptide" id="PRO_0000447059" description="U1-poneritoxin-Na3b" evidence="5">
    <location>
        <begin position="1"/>
        <end position="27"/>
    </location>
</feature>
<name>GTX3B_NEOAP</name>